<comment type="function">
    <text evidence="1">Cleaves proteins, imported into the mitochondrion, to their mature size. While most mitochondrial precursor proteins are processed to the mature form in one step by mitochondrial processing peptidase (MPP), the sequential cleavage by MIP of an octapeptide after initial processing by MPP is a required step for a subgroup of nuclear-encoded precursor proteins destined for the matrix or the inner membrane (By similarity).</text>
</comment>
<comment type="catalytic activity">
    <reaction>
        <text>Release of an N-terminal octapeptide as second stage of processing of some proteins imported into the mitochondrion.</text>
        <dbReference type="EC" id="3.4.24.59"/>
    </reaction>
</comment>
<comment type="cofactor">
    <cofactor evidence="1">
        <name>Zn(2+)</name>
        <dbReference type="ChEBI" id="CHEBI:29105"/>
    </cofactor>
    <text evidence="1">Binds 1 zinc ion.</text>
</comment>
<comment type="subcellular location">
    <subcellularLocation>
        <location evidence="1">Mitochondrion matrix</location>
    </subcellularLocation>
</comment>
<comment type="similarity">
    <text evidence="4">Belongs to the peptidase M3 family.</text>
</comment>
<proteinExistence type="inferred from homology"/>
<organism>
    <name type="scientific">Aspergillus fumigatus (strain CBS 144.89 / FGSC A1163 / CEA10)</name>
    <name type="common">Neosartorya fumigata</name>
    <dbReference type="NCBI Taxonomy" id="451804"/>
    <lineage>
        <taxon>Eukaryota</taxon>
        <taxon>Fungi</taxon>
        <taxon>Dikarya</taxon>
        <taxon>Ascomycota</taxon>
        <taxon>Pezizomycotina</taxon>
        <taxon>Eurotiomycetes</taxon>
        <taxon>Eurotiomycetidae</taxon>
        <taxon>Eurotiales</taxon>
        <taxon>Aspergillaceae</taxon>
        <taxon>Aspergillus</taxon>
        <taxon>Aspergillus subgen. Fumigati</taxon>
    </lineage>
</organism>
<reference key="1">
    <citation type="journal article" date="2008" name="PLoS Genet.">
        <title>Genomic islands in the pathogenic filamentous fungus Aspergillus fumigatus.</title>
        <authorList>
            <person name="Fedorova N.D."/>
            <person name="Khaldi N."/>
            <person name="Joardar V.S."/>
            <person name="Maiti R."/>
            <person name="Amedeo P."/>
            <person name="Anderson M.J."/>
            <person name="Crabtree J."/>
            <person name="Silva J.C."/>
            <person name="Badger J.H."/>
            <person name="Albarraq A."/>
            <person name="Angiuoli S."/>
            <person name="Bussey H."/>
            <person name="Bowyer P."/>
            <person name="Cotty P.J."/>
            <person name="Dyer P.S."/>
            <person name="Egan A."/>
            <person name="Galens K."/>
            <person name="Fraser-Liggett C.M."/>
            <person name="Haas B.J."/>
            <person name="Inman J.M."/>
            <person name="Kent R."/>
            <person name="Lemieux S."/>
            <person name="Malavazi I."/>
            <person name="Orvis J."/>
            <person name="Roemer T."/>
            <person name="Ronning C.M."/>
            <person name="Sundaram J.P."/>
            <person name="Sutton G."/>
            <person name="Turner G."/>
            <person name="Venter J.C."/>
            <person name="White O.R."/>
            <person name="Whitty B.R."/>
            <person name="Youngman P."/>
            <person name="Wolfe K.H."/>
            <person name="Goldman G.H."/>
            <person name="Wortman J.R."/>
            <person name="Jiang B."/>
            <person name="Denning D.W."/>
            <person name="Nierman W.C."/>
        </authorList>
    </citation>
    <scope>NUCLEOTIDE SEQUENCE [LARGE SCALE GENOMIC DNA]</scope>
    <source>
        <strain>CBS 144.89 / FGSC A1163 / CEA10</strain>
    </source>
</reference>
<feature type="transit peptide" description="Mitochondrion" evidence="2">
    <location>
        <begin position="1"/>
        <end position="41"/>
    </location>
</feature>
<feature type="chain" id="PRO_0000338570" description="Mitochondrial intermediate peptidase">
    <location>
        <begin position="42"/>
        <end position="801"/>
    </location>
</feature>
<feature type="active site" evidence="3">
    <location>
        <position position="565"/>
    </location>
</feature>
<feature type="binding site" evidence="3">
    <location>
        <position position="564"/>
    </location>
    <ligand>
        <name>Zn(2+)</name>
        <dbReference type="ChEBI" id="CHEBI:29105"/>
        <note>catalytic</note>
    </ligand>
</feature>
<feature type="binding site" evidence="3">
    <location>
        <position position="568"/>
    </location>
    <ligand>
        <name>Zn(2+)</name>
        <dbReference type="ChEBI" id="CHEBI:29105"/>
        <note>catalytic</note>
    </ligand>
</feature>
<feature type="binding site" evidence="3">
    <location>
        <position position="571"/>
    </location>
    <ligand>
        <name>Zn(2+)</name>
        <dbReference type="ChEBI" id="CHEBI:29105"/>
        <note>catalytic</note>
    </ligand>
</feature>
<evidence type="ECO:0000250" key="1"/>
<evidence type="ECO:0000255" key="2"/>
<evidence type="ECO:0000255" key="3">
    <source>
        <dbReference type="PROSITE-ProRule" id="PRU10095"/>
    </source>
</evidence>
<evidence type="ECO:0000305" key="4"/>
<gene>
    <name type="primary">oct1</name>
    <name type="ORF">AFUB_074600</name>
</gene>
<dbReference type="EC" id="3.4.24.59"/>
<dbReference type="EMBL" id="DS499599">
    <property type="protein sequence ID" value="EDP49433.1"/>
    <property type="molecule type" value="Genomic_DNA"/>
</dbReference>
<dbReference type="SMR" id="B0Y7Q2"/>
<dbReference type="EnsemblFungi" id="EDP49433">
    <property type="protein sequence ID" value="EDP49433"/>
    <property type="gene ID" value="AFUB_074600"/>
</dbReference>
<dbReference type="VEuPathDB" id="FungiDB:AFUB_074600"/>
<dbReference type="HOGENOM" id="CLU_001805_0_0_1"/>
<dbReference type="OrthoDB" id="66216at5052"/>
<dbReference type="PhylomeDB" id="B0Y7Q2"/>
<dbReference type="Proteomes" id="UP000001699">
    <property type="component" value="Unassembled WGS sequence"/>
</dbReference>
<dbReference type="GO" id="GO:0005759">
    <property type="term" value="C:mitochondrial matrix"/>
    <property type="evidence" value="ECO:0007669"/>
    <property type="project" value="UniProtKB-SubCell"/>
</dbReference>
<dbReference type="GO" id="GO:0046872">
    <property type="term" value="F:metal ion binding"/>
    <property type="evidence" value="ECO:0007669"/>
    <property type="project" value="UniProtKB-KW"/>
</dbReference>
<dbReference type="GO" id="GO:0004222">
    <property type="term" value="F:metalloendopeptidase activity"/>
    <property type="evidence" value="ECO:0007669"/>
    <property type="project" value="UniProtKB-EC"/>
</dbReference>
<dbReference type="GO" id="GO:0006518">
    <property type="term" value="P:peptide metabolic process"/>
    <property type="evidence" value="ECO:0007669"/>
    <property type="project" value="TreeGrafter"/>
</dbReference>
<dbReference type="GO" id="GO:0006627">
    <property type="term" value="P:protein processing involved in protein targeting to mitochondrion"/>
    <property type="evidence" value="ECO:0007669"/>
    <property type="project" value="TreeGrafter"/>
</dbReference>
<dbReference type="CDD" id="cd06457">
    <property type="entry name" value="M3A_MIP"/>
    <property type="match status" value="1"/>
</dbReference>
<dbReference type="FunFam" id="3.40.390.10:FF:000029">
    <property type="entry name" value="Mitochondrial intermediate peptidase 1"/>
    <property type="match status" value="1"/>
</dbReference>
<dbReference type="Gene3D" id="3.40.390.10">
    <property type="entry name" value="Collagenase (Catalytic Domain)"/>
    <property type="match status" value="1"/>
</dbReference>
<dbReference type="Gene3D" id="1.10.1370.10">
    <property type="entry name" value="Neurolysin, domain 3"/>
    <property type="match status" value="1"/>
</dbReference>
<dbReference type="InterPro" id="IPR033851">
    <property type="entry name" value="M3A_MIP"/>
</dbReference>
<dbReference type="InterPro" id="IPR024079">
    <property type="entry name" value="MetalloPept_cat_dom_sf"/>
</dbReference>
<dbReference type="InterPro" id="IPR024077">
    <property type="entry name" value="Neurolysin/TOP_dom2"/>
</dbReference>
<dbReference type="InterPro" id="IPR045090">
    <property type="entry name" value="Pept_M3A_M3B"/>
</dbReference>
<dbReference type="InterPro" id="IPR001567">
    <property type="entry name" value="Pept_M3A_M3B_dom"/>
</dbReference>
<dbReference type="PANTHER" id="PTHR11804:SF79">
    <property type="entry name" value="MITOCHONDRIAL INTERMEDIATE PEPTIDASE"/>
    <property type="match status" value="1"/>
</dbReference>
<dbReference type="PANTHER" id="PTHR11804">
    <property type="entry name" value="PROTEASE M3 THIMET OLIGOPEPTIDASE-RELATED"/>
    <property type="match status" value="1"/>
</dbReference>
<dbReference type="Pfam" id="PF01432">
    <property type="entry name" value="Peptidase_M3"/>
    <property type="match status" value="1"/>
</dbReference>
<dbReference type="SUPFAM" id="SSF55486">
    <property type="entry name" value="Metalloproteases ('zincins'), catalytic domain"/>
    <property type="match status" value="1"/>
</dbReference>
<dbReference type="PROSITE" id="PS00142">
    <property type="entry name" value="ZINC_PROTEASE"/>
    <property type="match status" value="1"/>
</dbReference>
<protein>
    <recommendedName>
        <fullName>Mitochondrial intermediate peptidase</fullName>
        <shortName>MIP</shortName>
        <ecNumber>3.4.24.59</ecNumber>
    </recommendedName>
    <alternativeName>
        <fullName>Octapeptidyl aminopeptidase</fullName>
    </alternativeName>
</protein>
<keyword id="KW-0378">Hydrolase</keyword>
<keyword id="KW-0479">Metal-binding</keyword>
<keyword id="KW-0482">Metalloprotease</keyword>
<keyword id="KW-0496">Mitochondrion</keyword>
<keyword id="KW-0645">Protease</keyword>
<keyword id="KW-0809">Transit peptide</keyword>
<keyword id="KW-0862">Zinc</keyword>
<sequence>MKDQLLVPLRRRPWTCQKCLQRLQLPRHQTRRSFETAASPFPRPLDSLPADYARTKTVDDDTLRRVFDSQQFWREFSQQRAAQPKPTGLVQNQYLTSPDGFRTFANVSLQKCQAIVSKVLAASTLEEYRTMARDLDRLSDLLCRVIDLSDFIRVIHPDPQVQEAATQAYALMFEYMNVLNTTTGLNDQLKKAAANPEVTSQWSDEEKIVAQILIKDFSNSAIHMPPHERQRFVNLSNDISQLGSSFVNGAEPAKSHVSVATNNLRGLDPILVQQIKRWNRTAAVPTTGMIPRLALRSVHDENVRREVYLASRTSSKRQLHRLEELLLKRAELAKLSGYESFAHMTLSDKMAKSPEAVSNFLTALVESNRKLVREELSQLQVMKGAPLQPWDHAYYVHQRVLQYSQARRSRELSAVPEFFSLGTVMQGLSRLFDRLYGVRLVPQEPAPGETWNPDVRRLDVVDEAGRHIAVIYCDLFSRPNKHPNPAHFTLRCSREISAEEVAECASLDQSSHPNDGMATAVDPVTQTLRQLPTIALVCDFPEPGTNGGGRPSLLSEHSVRTLFHEMGHAVHSILGQTRLQSISGTRCATDFAELPSVLMEHFATAPSVLALYARHWRTDEPLSEGMIRSMERDRTAHGSIYGAVENEAQILMALVDQAYHSRPADGGRIDSTALYQQVSQQHSSLPEPADATTPPTSWQGFFGHLYGYGATYYSYIFDRAIANKLWVDVFGAGRHAVDRAAGERYKNEVLRWGGGRSGWECVAGALGSANESNADGRLVEGGDQAMREVGRWGLGRDGVSG</sequence>
<accession>B0Y7Q2</accession>
<name>PMIP_ASPFC</name>